<name>MNMA_CERS4</name>
<gene>
    <name evidence="1" type="primary">mnmA</name>
    <name type="ordered locus">RHOS4_12080</name>
    <name type="ORF">RSP_2619</name>
</gene>
<comment type="function">
    <text evidence="1">Catalyzes the 2-thiolation of uridine at the wobble position (U34) of tRNA, leading to the formation of s(2)U34.</text>
</comment>
<comment type="catalytic activity">
    <reaction evidence="1">
        <text>S-sulfanyl-L-cysteinyl-[protein] + uridine(34) in tRNA + AH2 + ATP = 2-thiouridine(34) in tRNA + L-cysteinyl-[protein] + A + AMP + diphosphate + H(+)</text>
        <dbReference type="Rhea" id="RHEA:47032"/>
        <dbReference type="Rhea" id="RHEA-COMP:10131"/>
        <dbReference type="Rhea" id="RHEA-COMP:11726"/>
        <dbReference type="Rhea" id="RHEA-COMP:11727"/>
        <dbReference type="Rhea" id="RHEA-COMP:11728"/>
        <dbReference type="ChEBI" id="CHEBI:13193"/>
        <dbReference type="ChEBI" id="CHEBI:15378"/>
        <dbReference type="ChEBI" id="CHEBI:17499"/>
        <dbReference type="ChEBI" id="CHEBI:29950"/>
        <dbReference type="ChEBI" id="CHEBI:30616"/>
        <dbReference type="ChEBI" id="CHEBI:33019"/>
        <dbReference type="ChEBI" id="CHEBI:61963"/>
        <dbReference type="ChEBI" id="CHEBI:65315"/>
        <dbReference type="ChEBI" id="CHEBI:87170"/>
        <dbReference type="ChEBI" id="CHEBI:456215"/>
        <dbReference type="EC" id="2.8.1.13"/>
    </reaction>
</comment>
<comment type="subcellular location">
    <subcellularLocation>
        <location evidence="1">Cytoplasm</location>
    </subcellularLocation>
</comment>
<comment type="similarity">
    <text evidence="1">Belongs to the MnmA/TRMU family.</text>
</comment>
<reference key="1">
    <citation type="submission" date="2005-09" db="EMBL/GenBank/DDBJ databases">
        <title>Complete sequence of chromosome 1 of Rhodobacter sphaeroides 2.4.1.</title>
        <authorList>
            <person name="Copeland A."/>
            <person name="Lucas S."/>
            <person name="Lapidus A."/>
            <person name="Barry K."/>
            <person name="Detter J.C."/>
            <person name="Glavina T."/>
            <person name="Hammon N."/>
            <person name="Israni S."/>
            <person name="Pitluck S."/>
            <person name="Richardson P."/>
            <person name="Mackenzie C."/>
            <person name="Choudhary M."/>
            <person name="Larimer F."/>
            <person name="Hauser L.J."/>
            <person name="Land M."/>
            <person name="Donohue T.J."/>
            <person name="Kaplan S."/>
        </authorList>
    </citation>
    <scope>NUCLEOTIDE SEQUENCE [LARGE SCALE GENOMIC DNA]</scope>
    <source>
        <strain>ATCC 17023 / DSM 158 / JCM 6121 / CCUG 31486 / LMG 2827 / NBRC 12203 / NCIMB 8253 / ATH 2.4.1.</strain>
    </source>
</reference>
<feature type="chain" id="PRO_0000349768" description="tRNA-specific 2-thiouridylase MnmA">
    <location>
        <begin position="1"/>
        <end position="379"/>
    </location>
</feature>
<feature type="region of interest" description="Interaction with tRNA" evidence="1">
    <location>
        <begin position="163"/>
        <end position="165"/>
    </location>
</feature>
<feature type="active site" description="Nucleophile" evidence="1">
    <location>
        <position position="117"/>
    </location>
</feature>
<feature type="active site" description="Cysteine persulfide intermediate" evidence="1">
    <location>
        <position position="214"/>
    </location>
</feature>
<feature type="binding site" evidence="1">
    <location>
        <begin position="23"/>
        <end position="30"/>
    </location>
    <ligand>
        <name>ATP</name>
        <dbReference type="ChEBI" id="CHEBI:30616"/>
    </ligand>
</feature>
<feature type="binding site" evidence="1">
    <location>
        <position position="49"/>
    </location>
    <ligand>
        <name>ATP</name>
        <dbReference type="ChEBI" id="CHEBI:30616"/>
    </ligand>
</feature>
<feature type="binding site" evidence="1">
    <location>
        <position position="141"/>
    </location>
    <ligand>
        <name>ATP</name>
        <dbReference type="ChEBI" id="CHEBI:30616"/>
    </ligand>
</feature>
<feature type="site" description="Interaction with tRNA" evidence="1">
    <location>
        <position position="142"/>
    </location>
</feature>
<feature type="site" description="Interaction with tRNA" evidence="1">
    <location>
        <position position="356"/>
    </location>
</feature>
<feature type="disulfide bond" description="Alternate" evidence="1">
    <location>
        <begin position="117"/>
        <end position="214"/>
    </location>
</feature>
<organism>
    <name type="scientific">Cereibacter sphaeroides (strain ATCC 17023 / DSM 158 / JCM 6121 / CCUG 31486 / LMG 2827 / NBRC 12203 / NCIMB 8253 / ATH 2.4.1.)</name>
    <name type="common">Rhodobacter sphaeroides</name>
    <dbReference type="NCBI Taxonomy" id="272943"/>
    <lineage>
        <taxon>Bacteria</taxon>
        <taxon>Pseudomonadati</taxon>
        <taxon>Pseudomonadota</taxon>
        <taxon>Alphaproteobacteria</taxon>
        <taxon>Rhodobacterales</taxon>
        <taxon>Paracoccaceae</taxon>
        <taxon>Cereibacter</taxon>
    </lineage>
</organism>
<proteinExistence type="inferred from homology"/>
<accession>Q3J358</accession>
<protein>
    <recommendedName>
        <fullName evidence="1">tRNA-specific 2-thiouridylase MnmA</fullName>
        <ecNumber evidence="1">2.8.1.13</ecNumber>
    </recommendedName>
</protein>
<dbReference type="EC" id="2.8.1.13" evidence="1"/>
<dbReference type="EMBL" id="CP000143">
    <property type="protein sequence ID" value="ABA78776.1"/>
    <property type="molecule type" value="Genomic_DNA"/>
</dbReference>
<dbReference type="RefSeq" id="WP_011337613.1">
    <property type="nucleotide sequence ID" value="NC_007493.2"/>
</dbReference>
<dbReference type="RefSeq" id="YP_352677.1">
    <property type="nucleotide sequence ID" value="NC_007493.2"/>
</dbReference>
<dbReference type="SMR" id="Q3J358"/>
<dbReference type="STRING" id="272943.RSP_2619"/>
<dbReference type="EnsemblBacteria" id="ABA78776">
    <property type="protein sequence ID" value="ABA78776"/>
    <property type="gene ID" value="RSP_2619"/>
</dbReference>
<dbReference type="GeneID" id="3720292"/>
<dbReference type="KEGG" id="rsp:RSP_2619"/>
<dbReference type="PATRIC" id="fig|272943.9.peg.1537"/>
<dbReference type="eggNOG" id="COG0482">
    <property type="taxonomic scope" value="Bacteria"/>
</dbReference>
<dbReference type="OrthoDB" id="9800696at2"/>
<dbReference type="PhylomeDB" id="Q3J358"/>
<dbReference type="Proteomes" id="UP000002703">
    <property type="component" value="Chromosome 1"/>
</dbReference>
<dbReference type="GO" id="GO:0005737">
    <property type="term" value="C:cytoplasm"/>
    <property type="evidence" value="ECO:0007669"/>
    <property type="project" value="UniProtKB-SubCell"/>
</dbReference>
<dbReference type="GO" id="GO:0005524">
    <property type="term" value="F:ATP binding"/>
    <property type="evidence" value="ECO:0007669"/>
    <property type="project" value="UniProtKB-KW"/>
</dbReference>
<dbReference type="GO" id="GO:0000049">
    <property type="term" value="F:tRNA binding"/>
    <property type="evidence" value="ECO:0007669"/>
    <property type="project" value="UniProtKB-KW"/>
</dbReference>
<dbReference type="GO" id="GO:0103016">
    <property type="term" value="F:tRNA-uridine 2-sulfurtransferase activity"/>
    <property type="evidence" value="ECO:0007669"/>
    <property type="project" value="UniProtKB-EC"/>
</dbReference>
<dbReference type="GO" id="GO:0002143">
    <property type="term" value="P:tRNA wobble position uridine thiolation"/>
    <property type="evidence" value="ECO:0007669"/>
    <property type="project" value="TreeGrafter"/>
</dbReference>
<dbReference type="CDD" id="cd01998">
    <property type="entry name" value="MnmA_TRMU-like"/>
    <property type="match status" value="1"/>
</dbReference>
<dbReference type="FunFam" id="2.30.30.280:FF:000001">
    <property type="entry name" value="tRNA-specific 2-thiouridylase MnmA"/>
    <property type="match status" value="1"/>
</dbReference>
<dbReference type="FunFam" id="3.40.50.620:FF:000115">
    <property type="entry name" value="tRNA-specific 2-thiouridylase MnmA"/>
    <property type="match status" value="1"/>
</dbReference>
<dbReference type="Gene3D" id="2.30.30.280">
    <property type="entry name" value="Adenine nucleotide alpha hydrolases-like domains"/>
    <property type="match status" value="1"/>
</dbReference>
<dbReference type="Gene3D" id="3.40.50.620">
    <property type="entry name" value="HUPs"/>
    <property type="match status" value="1"/>
</dbReference>
<dbReference type="Gene3D" id="2.40.30.10">
    <property type="entry name" value="Translation factors"/>
    <property type="match status" value="1"/>
</dbReference>
<dbReference type="HAMAP" id="MF_00144">
    <property type="entry name" value="tRNA_thiouridyl_MnmA"/>
    <property type="match status" value="1"/>
</dbReference>
<dbReference type="InterPro" id="IPR004506">
    <property type="entry name" value="MnmA-like"/>
</dbReference>
<dbReference type="InterPro" id="IPR046885">
    <property type="entry name" value="MnmA-like_C"/>
</dbReference>
<dbReference type="InterPro" id="IPR046884">
    <property type="entry name" value="MnmA-like_central"/>
</dbReference>
<dbReference type="InterPro" id="IPR023382">
    <property type="entry name" value="MnmA-like_central_sf"/>
</dbReference>
<dbReference type="InterPro" id="IPR014729">
    <property type="entry name" value="Rossmann-like_a/b/a_fold"/>
</dbReference>
<dbReference type="NCBIfam" id="NF001138">
    <property type="entry name" value="PRK00143.1"/>
    <property type="match status" value="1"/>
</dbReference>
<dbReference type="NCBIfam" id="TIGR00420">
    <property type="entry name" value="trmU"/>
    <property type="match status" value="1"/>
</dbReference>
<dbReference type="PANTHER" id="PTHR11933:SF5">
    <property type="entry name" value="MITOCHONDRIAL TRNA-SPECIFIC 2-THIOURIDYLASE 1"/>
    <property type="match status" value="1"/>
</dbReference>
<dbReference type="PANTHER" id="PTHR11933">
    <property type="entry name" value="TRNA 5-METHYLAMINOMETHYL-2-THIOURIDYLATE -METHYLTRANSFERASE"/>
    <property type="match status" value="1"/>
</dbReference>
<dbReference type="Pfam" id="PF03054">
    <property type="entry name" value="tRNA_Me_trans"/>
    <property type="match status" value="1"/>
</dbReference>
<dbReference type="Pfam" id="PF20258">
    <property type="entry name" value="tRNA_Me_trans_C"/>
    <property type="match status" value="1"/>
</dbReference>
<dbReference type="Pfam" id="PF20259">
    <property type="entry name" value="tRNA_Me_trans_M"/>
    <property type="match status" value="1"/>
</dbReference>
<dbReference type="SUPFAM" id="SSF52402">
    <property type="entry name" value="Adenine nucleotide alpha hydrolases-like"/>
    <property type="match status" value="1"/>
</dbReference>
<evidence type="ECO:0000255" key="1">
    <source>
        <dbReference type="HAMAP-Rule" id="MF_00144"/>
    </source>
</evidence>
<sequence length="379" mass="40983">MLDHPLNSLGFAKPPAVTRVVVAMSGGVDSSVVAAELAAEGYDVVGVTLQLYDHGAALAKKGACCAGRDIHDARRVAETMGFPHYVLDYENTFREAVIDEFADAYLAGATPVPCIRCNERVKFKDLLQTAKDLDADCMATGHYIQRKMGPAGPELHSAADPARDQSYFLFSTTPEQLAFLRFPLGHLASKAETRALAARHGLPVADKPDSQDICFVPNGNYAEVIQKLRPGAADPGEIVDLSGRVLGEHRGVIHYTIGQRRGLGIGGLGDPLYVVRLDPERRQVIVGPKEALSTRIVPVREINWLGDAPLTSRSEWQVMAKVRSTRAPREAVIRPLSDTEAEVELIAPEDGVSPGQACVFYAPGDSRILGGGWIWRGAR</sequence>
<keyword id="KW-0067">ATP-binding</keyword>
<keyword id="KW-0963">Cytoplasm</keyword>
<keyword id="KW-1015">Disulfide bond</keyword>
<keyword id="KW-0547">Nucleotide-binding</keyword>
<keyword id="KW-1185">Reference proteome</keyword>
<keyword id="KW-0694">RNA-binding</keyword>
<keyword id="KW-0808">Transferase</keyword>
<keyword id="KW-0819">tRNA processing</keyword>
<keyword id="KW-0820">tRNA-binding</keyword>